<proteinExistence type="inferred from homology"/>
<organism>
    <name type="scientific">Prochlorococcus marinus (strain AS9601)</name>
    <dbReference type="NCBI Taxonomy" id="146891"/>
    <lineage>
        <taxon>Bacteria</taxon>
        <taxon>Bacillati</taxon>
        <taxon>Cyanobacteriota</taxon>
        <taxon>Cyanophyceae</taxon>
        <taxon>Synechococcales</taxon>
        <taxon>Prochlorococcaceae</taxon>
        <taxon>Prochlorococcus</taxon>
    </lineage>
</organism>
<gene>
    <name evidence="1" type="primary">rplA</name>
    <name evidence="1" type="synonym">rpl1</name>
    <name type="ordered locus">A9601_02211</name>
</gene>
<name>RL1_PROMS</name>
<protein>
    <recommendedName>
        <fullName evidence="1">Large ribosomal subunit protein uL1</fullName>
    </recommendedName>
    <alternativeName>
        <fullName evidence="2">50S ribosomal protein L1</fullName>
    </alternativeName>
</protein>
<sequence length="235" mass="25682">MKKLSKRMAALSTKIEDRIYAPLEALSIIKENANAKFDETIEAHIRLGIDPKYTDQQLRTTVVLPHGTGQSIKIAVITSGENVSKAKAAGADLFGEEDLVESINKGNMEFDLLIATPDMMPKVAKLGRVLGPRGLMPNPKAGTVTNDIANAIKEFKAGKLEFRADKAGIVHVRFGKASFTKEALFDNLKTLQESIDKNKPSGAKGKYWKTFYVTSTMGPSVQLDINAVQDYQPEG</sequence>
<comment type="function">
    <text evidence="1">Binds directly to 23S rRNA. The L1 stalk is quite mobile in the ribosome, and is involved in E site tRNA release.</text>
</comment>
<comment type="function">
    <text evidence="1">Protein L1 is also a translational repressor protein, it controls the translation of the L11 operon by binding to its mRNA.</text>
</comment>
<comment type="subunit">
    <text evidence="1">Part of the 50S ribosomal subunit.</text>
</comment>
<comment type="similarity">
    <text evidence="1">Belongs to the universal ribosomal protein uL1 family.</text>
</comment>
<feature type="chain" id="PRO_0000308071" description="Large ribosomal subunit protein uL1">
    <location>
        <begin position="1"/>
        <end position="235"/>
    </location>
</feature>
<keyword id="KW-0678">Repressor</keyword>
<keyword id="KW-0687">Ribonucleoprotein</keyword>
<keyword id="KW-0689">Ribosomal protein</keyword>
<keyword id="KW-0694">RNA-binding</keyword>
<keyword id="KW-0699">rRNA-binding</keyword>
<keyword id="KW-0810">Translation regulation</keyword>
<keyword id="KW-0820">tRNA-binding</keyword>
<reference key="1">
    <citation type="journal article" date="2007" name="PLoS Genet.">
        <title>Patterns and implications of gene gain and loss in the evolution of Prochlorococcus.</title>
        <authorList>
            <person name="Kettler G.C."/>
            <person name="Martiny A.C."/>
            <person name="Huang K."/>
            <person name="Zucker J."/>
            <person name="Coleman M.L."/>
            <person name="Rodrigue S."/>
            <person name="Chen F."/>
            <person name="Lapidus A."/>
            <person name="Ferriera S."/>
            <person name="Johnson J."/>
            <person name="Steglich C."/>
            <person name="Church G.M."/>
            <person name="Richardson P."/>
            <person name="Chisholm S.W."/>
        </authorList>
    </citation>
    <scope>NUCLEOTIDE SEQUENCE [LARGE SCALE GENOMIC DNA]</scope>
    <source>
        <strain>AS9601</strain>
    </source>
</reference>
<accession>A2BNZ8</accession>
<evidence type="ECO:0000255" key="1">
    <source>
        <dbReference type="HAMAP-Rule" id="MF_01318"/>
    </source>
</evidence>
<evidence type="ECO:0000305" key="2"/>
<dbReference type="EMBL" id="CP000551">
    <property type="protein sequence ID" value="ABM69509.1"/>
    <property type="molecule type" value="Genomic_DNA"/>
</dbReference>
<dbReference type="RefSeq" id="WP_011817696.1">
    <property type="nucleotide sequence ID" value="NC_008816.1"/>
</dbReference>
<dbReference type="SMR" id="A2BNZ8"/>
<dbReference type="STRING" id="146891.A9601_02211"/>
<dbReference type="KEGG" id="pmb:A9601_02211"/>
<dbReference type="eggNOG" id="COG0081">
    <property type="taxonomic scope" value="Bacteria"/>
</dbReference>
<dbReference type="HOGENOM" id="CLU_062853_0_0_3"/>
<dbReference type="OrthoDB" id="9803740at2"/>
<dbReference type="Proteomes" id="UP000002590">
    <property type="component" value="Chromosome"/>
</dbReference>
<dbReference type="GO" id="GO:0015934">
    <property type="term" value="C:large ribosomal subunit"/>
    <property type="evidence" value="ECO:0007669"/>
    <property type="project" value="InterPro"/>
</dbReference>
<dbReference type="GO" id="GO:0019843">
    <property type="term" value="F:rRNA binding"/>
    <property type="evidence" value="ECO:0007669"/>
    <property type="project" value="UniProtKB-UniRule"/>
</dbReference>
<dbReference type="GO" id="GO:0003735">
    <property type="term" value="F:structural constituent of ribosome"/>
    <property type="evidence" value="ECO:0007669"/>
    <property type="project" value="InterPro"/>
</dbReference>
<dbReference type="GO" id="GO:0000049">
    <property type="term" value="F:tRNA binding"/>
    <property type="evidence" value="ECO:0007669"/>
    <property type="project" value="UniProtKB-KW"/>
</dbReference>
<dbReference type="GO" id="GO:0006417">
    <property type="term" value="P:regulation of translation"/>
    <property type="evidence" value="ECO:0007669"/>
    <property type="project" value="UniProtKB-KW"/>
</dbReference>
<dbReference type="GO" id="GO:0006412">
    <property type="term" value="P:translation"/>
    <property type="evidence" value="ECO:0007669"/>
    <property type="project" value="UniProtKB-UniRule"/>
</dbReference>
<dbReference type="CDD" id="cd00403">
    <property type="entry name" value="Ribosomal_L1"/>
    <property type="match status" value="1"/>
</dbReference>
<dbReference type="FunFam" id="3.40.50.790:FF:000001">
    <property type="entry name" value="50S ribosomal protein L1"/>
    <property type="match status" value="1"/>
</dbReference>
<dbReference type="Gene3D" id="3.30.190.20">
    <property type="match status" value="1"/>
</dbReference>
<dbReference type="Gene3D" id="3.40.50.790">
    <property type="match status" value="1"/>
</dbReference>
<dbReference type="HAMAP" id="MF_01318_B">
    <property type="entry name" value="Ribosomal_uL1_B"/>
    <property type="match status" value="1"/>
</dbReference>
<dbReference type="InterPro" id="IPR005878">
    <property type="entry name" value="Ribosom_uL1_bac-type"/>
</dbReference>
<dbReference type="InterPro" id="IPR002143">
    <property type="entry name" value="Ribosomal_uL1"/>
</dbReference>
<dbReference type="InterPro" id="IPR023674">
    <property type="entry name" value="Ribosomal_uL1-like"/>
</dbReference>
<dbReference type="InterPro" id="IPR028364">
    <property type="entry name" value="Ribosomal_uL1/biogenesis"/>
</dbReference>
<dbReference type="InterPro" id="IPR016095">
    <property type="entry name" value="Ribosomal_uL1_3-a/b-sand"/>
</dbReference>
<dbReference type="InterPro" id="IPR023673">
    <property type="entry name" value="Ribosomal_uL1_CS"/>
</dbReference>
<dbReference type="NCBIfam" id="TIGR01169">
    <property type="entry name" value="rplA_bact"/>
    <property type="match status" value="1"/>
</dbReference>
<dbReference type="PANTHER" id="PTHR36427">
    <property type="entry name" value="54S RIBOSOMAL PROTEIN L1, MITOCHONDRIAL"/>
    <property type="match status" value="1"/>
</dbReference>
<dbReference type="PANTHER" id="PTHR36427:SF3">
    <property type="entry name" value="LARGE RIBOSOMAL SUBUNIT PROTEIN UL1M"/>
    <property type="match status" value="1"/>
</dbReference>
<dbReference type="Pfam" id="PF00687">
    <property type="entry name" value="Ribosomal_L1"/>
    <property type="match status" value="1"/>
</dbReference>
<dbReference type="PIRSF" id="PIRSF002155">
    <property type="entry name" value="Ribosomal_L1"/>
    <property type="match status" value="1"/>
</dbReference>
<dbReference type="SUPFAM" id="SSF56808">
    <property type="entry name" value="Ribosomal protein L1"/>
    <property type="match status" value="1"/>
</dbReference>
<dbReference type="PROSITE" id="PS01199">
    <property type="entry name" value="RIBOSOMAL_L1"/>
    <property type="match status" value="1"/>
</dbReference>